<feature type="chain" id="PRO_0000221497" description="Small, acid-soluble spore protein Tlp">
    <location>
        <begin position="1"/>
        <end position="65"/>
    </location>
</feature>
<reference key="1">
    <citation type="journal article" date="2006" name="J. Bacteriol.">
        <title>Pathogenomic sequence analysis of Bacillus cereus and Bacillus thuringiensis isolates closely related to Bacillus anthracis.</title>
        <authorList>
            <person name="Han C.S."/>
            <person name="Xie G."/>
            <person name="Challacombe J.F."/>
            <person name="Altherr M.R."/>
            <person name="Bhotika S.S."/>
            <person name="Bruce D."/>
            <person name="Campbell C.S."/>
            <person name="Campbell M.L."/>
            <person name="Chen J."/>
            <person name="Chertkov O."/>
            <person name="Cleland C."/>
            <person name="Dimitrijevic M."/>
            <person name="Doggett N.A."/>
            <person name="Fawcett J.J."/>
            <person name="Glavina T."/>
            <person name="Goodwin L.A."/>
            <person name="Hill K.K."/>
            <person name="Hitchcock P."/>
            <person name="Jackson P.J."/>
            <person name="Keim P."/>
            <person name="Kewalramani A.R."/>
            <person name="Longmire J."/>
            <person name="Lucas S."/>
            <person name="Malfatti S."/>
            <person name="McMurry K."/>
            <person name="Meincke L.J."/>
            <person name="Misra M."/>
            <person name="Moseman B.L."/>
            <person name="Mundt M."/>
            <person name="Munk A.C."/>
            <person name="Okinaka R.T."/>
            <person name="Parson-Quintana B."/>
            <person name="Reilly L.P."/>
            <person name="Richardson P."/>
            <person name="Robinson D.L."/>
            <person name="Rubin E."/>
            <person name="Saunders E."/>
            <person name="Tapia R."/>
            <person name="Tesmer J.G."/>
            <person name="Thayer N."/>
            <person name="Thompson L.S."/>
            <person name="Tice H."/>
            <person name="Ticknor L.O."/>
            <person name="Wills P.L."/>
            <person name="Brettin T.S."/>
            <person name="Gilna P."/>
        </authorList>
    </citation>
    <scope>NUCLEOTIDE SEQUENCE [LARGE SCALE GENOMIC DNA]</scope>
    <source>
        <strain>ZK / E33L</strain>
    </source>
</reference>
<comment type="subcellular location">
    <subcellularLocation>
        <location evidence="1">Spore core</location>
    </subcellularLocation>
</comment>
<comment type="induction">
    <text evidence="1">Expressed only in the forespore compartment of sporulating cells.</text>
</comment>
<comment type="similarity">
    <text evidence="1">Belongs to the Tlp family.</text>
</comment>
<organism>
    <name type="scientific">Bacillus cereus (strain ZK / E33L)</name>
    <dbReference type="NCBI Taxonomy" id="288681"/>
    <lineage>
        <taxon>Bacteria</taxon>
        <taxon>Bacillati</taxon>
        <taxon>Bacillota</taxon>
        <taxon>Bacilli</taxon>
        <taxon>Bacillales</taxon>
        <taxon>Bacillaceae</taxon>
        <taxon>Bacillus</taxon>
        <taxon>Bacillus cereus group</taxon>
    </lineage>
</organism>
<evidence type="ECO:0000255" key="1">
    <source>
        <dbReference type="HAMAP-Rule" id="MF_01506"/>
    </source>
</evidence>
<sequence>MPNPDNRSDNAEKLQEMVQNTIDNFNEAKETAELSNEKDRSAIEAKNQRRLESIDSLKSEIKDES</sequence>
<name>TLP_BACCZ</name>
<keyword id="KW-0749">Sporulation</keyword>
<accession>Q637L7</accession>
<protein>
    <recommendedName>
        <fullName evidence="1">Small, acid-soluble spore protein Tlp</fullName>
    </recommendedName>
</protein>
<proteinExistence type="inferred from homology"/>
<gene>
    <name evidence="1" type="primary">tlp</name>
    <name type="ordered locus">BCE33L3315</name>
</gene>
<dbReference type="EMBL" id="CP000001">
    <property type="protein sequence ID" value="AAU16947.1"/>
    <property type="molecule type" value="Genomic_DNA"/>
</dbReference>
<dbReference type="RefSeq" id="WP_001133509.1">
    <property type="nucleotide sequence ID" value="NZ_CP009968.1"/>
</dbReference>
<dbReference type="SMR" id="Q637L7"/>
<dbReference type="GeneID" id="93007575"/>
<dbReference type="KEGG" id="bcz:BCE33L3315"/>
<dbReference type="PATRIC" id="fig|288681.22.peg.2112"/>
<dbReference type="Proteomes" id="UP000002612">
    <property type="component" value="Chromosome"/>
</dbReference>
<dbReference type="GO" id="GO:0030436">
    <property type="term" value="P:asexual sporulation"/>
    <property type="evidence" value="ECO:0007669"/>
    <property type="project" value="UniProtKB-UniRule"/>
</dbReference>
<dbReference type="GO" id="GO:0030435">
    <property type="term" value="P:sporulation resulting in formation of a cellular spore"/>
    <property type="evidence" value="ECO:0007669"/>
    <property type="project" value="UniProtKB-KW"/>
</dbReference>
<dbReference type="HAMAP" id="MF_01506">
    <property type="entry name" value="Tlp"/>
    <property type="match status" value="1"/>
</dbReference>
<dbReference type="InterPro" id="IPR017524">
    <property type="entry name" value="SASP_thioredoxin-like"/>
</dbReference>
<dbReference type="NCBIfam" id="TIGR03090">
    <property type="entry name" value="SASP_tlp"/>
    <property type="match status" value="1"/>
</dbReference>
<dbReference type="Pfam" id="PF19824">
    <property type="entry name" value="Tlp"/>
    <property type="match status" value="1"/>
</dbReference>